<name>NDK_RICFE</name>
<dbReference type="EC" id="2.7.4.6" evidence="1"/>
<dbReference type="EMBL" id="CP000053">
    <property type="protein sequence ID" value="AAY60971.1"/>
    <property type="molecule type" value="Genomic_DNA"/>
</dbReference>
<dbReference type="SMR" id="Q4UN87"/>
<dbReference type="STRING" id="315456.RF_0120"/>
<dbReference type="KEGG" id="rfe:RF_0120"/>
<dbReference type="eggNOG" id="COG0105">
    <property type="taxonomic scope" value="Bacteria"/>
</dbReference>
<dbReference type="HOGENOM" id="CLU_060216_8_1_5"/>
<dbReference type="OrthoDB" id="9801161at2"/>
<dbReference type="Proteomes" id="UP000008548">
    <property type="component" value="Chromosome"/>
</dbReference>
<dbReference type="GO" id="GO:0005737">
    <property type="term" value="C:cytoplasm"/>
    <property type="evidence" value="ECO:0007669"/>
    <property type="project" value="UniProtKB-SubCell"/>
</dbReference>
<dbReference type="GO" id="GO:0005524">
    <property type="term" value="F:ATP binding"/>
    <property type="evidence" value="ECO:0007669"/>
    <property type="project" value="UniProtKB-UniRule"/>
</dbReference>
<dbReference type="GO" id="GO:0046872">
    <property type="term" value="F:metal ion binding"/>
    <property type="evidence" value="ECO:0007669"/>
    <property type="project" value="UniProtKB-KW"/>
</dbReference>
<dbReference type="GO" id="GO:0004550">
    <property type="term" value="F:nucleoside diphosphate kinase activity"/>
    <property type="evidence" value="ECO:0007669"/>
    <property type="project" value="UniProtKB-UniRule"/>
</dbReference>
<dbReference type="GO" id="GO:0006241">
    <property type="term" value="P:CTP biosynthetic process"/>
    <property type="evidence" value="ECO:0007669"/>
    <property type="project" value="UniProtKB-UniRule"/>
</dbReference>
<dbReference type="GO" id="GO:0006183">
    <property type="term" value="P:GTP biosynthetic process"/>
    <property type="evidence" value="ECO:0007669"/>
    <property type="project" value="UniProtKB-UniRule"/>
</dbReference>
<dbReference type="GO" id="GO:0006228">
    <property type="term" value="P:UTP biosynthetic process"/>
    <property type="evidence" value="ECO:0007669"/>
    <property type="project" value="UniProtKB-UniRule"/>
</dbReference>
<dbReference type="CDD" id="cd04413">
    <property type="entry name" value="NDPk_I"/>
    <property type="match status" value="1"/>
</dbReference>
<dbReference type="FunFam" id="3.30.70.141:FF:000003">
    <property type="entry name" value="Nucleoside diphosphate kinase"/>
    <property type="match status" value="1"/>
</dbReference>
<dbReference type="Gene3D" id="3.30.70.141">
    <property type="entry name" value="Nucleoside diphosphate kinase-like domain"/>
    <property type="match status" value="1"/>
</dbReference>
<dbReference type="HAMAP" id="MF_00451">
    <property type="entry name" value="NDP_kinase"/>
    <property type="match status" value="1"/>
</dbReference>
<dbReference type="InterPro" id="IPR034907">
    <property type="entry name" value="NDK-like_dom"/>
</dbReference>
<dbReference type="InterPro" id="IPR036850">
    <property type="entry name" value="NDK-like_dom_sf"/>
</dbReference>
<dbReference type="InterPro" id="IPR001564">
    <property type="entry name" value="Nucleoside_diP_kinase"/>
</dbReference>
<dbReference type="InterPro" id="IPR023005">
    <property type="entry name" value="Nucleoside_diP_kinase_AS"/>
</dbReference>
<dbReference type="NCBIfam" id="NF001908">
    <property type="entry name" value="PRK00668.1"/>
    <property type="match status" value="1"/>
</dbReference>
<dbReference type="PANTHER" id="PTHR46161">
    <property type="entry name" value="NUCLEOSIDE DIPHOSPHATE KINASE"/>
    <property type="match status" value="1"/>
</dbReference>
<dbReference type="PANTHER" id="PTHR46161:SF3">
    <property type="entry name" value="NUCLEOSIDE DIPHOSPHATE KINASE DDB_G0292928-RELATED"/>
    <property type="match status" value="1"/>
</dbReference>
<dbReference type="Pfam" id="PF00334">
    <property type="entry name" value="NDK"/>
    <property type="match status" value="1"/>
</dbReference>
<dbReference type="PRINTS" id="PR01243">
    <property type="entry name" value="NUCDPKINASE"/>
</dbReference>
<dbReference type="SMART" id="SM00562">
    <property type="entry name" value="NDK"/>
    <property type="match status" value="1"/>
</dbReference>
<dbReference type="SUPFAM" id="SSF54919">
    <property type="entry name" value="Nucleoside diphosphate kinase, NDK"/>
    <property type="match status" value="1"/>
</dbReference>
<dbReference type="PROSITE" id="PS00469">
    <property type="entry name" value="NDPK"/>
    <property type="match status" value="1"/>
</dbReference>
<dbReference type="PROSITE" id="PS51374">
    <property type="entry name" value="NDPK_LIKE"/>
    <property type="match status" value="1"/>
</dbReference>
<protein>
    <recommendedName>
        <fullName evidence="1">Nucleoside diphosphate kinase</fullName>
        <shortName evidence="1">NDK</shortName>
        <shortName evidence="1">NDP kinase</shortName>
        <ecNumber evidence="1">2.7.4.6</ecNumber>
    </recommendedName>
    <alternativeName>
        <fullName evidence="1">Nucleoside-2-P kinase</fullName>
    </alternativeName>
</protein>
<gene>
    <name evidence="1" type="primary">ndk</name>
    <name type="ordered locus">RF_0120</name>
</gene>
<comment type="function">
    <text evidence="1">Major role in the synthesis of nucleoside triphosphates other than ATP. The ATP gamma phosphate is transferred to the NDP beta phosphate via a ping-pong mechanism, using a phosphorylated active-site intermediate.</text>
</comment>
<comment type="catalytic activity">
    <reaction evidence="1">
        <text>a 2'-deoxyribonucleoside 5'-diphosphate + ATP = a 2'-deoxyribonucleoside 5'-triphosphate + ADP</text>
        <dbReference type="Rhea" id="RHEA:44640"/>
        <dbReference type="ChEBI" id="CHEBI:30616"/>
        <dbReference type="ChEBI" id="CHEBI:61560"/>
        <dbReference type="ChEBI" id="CHEBI:73316"/>
        <dbReference type="ChEBI" id="CHEBI:456216"/>
        <dbReference type="EC" id="2.7.4.6"/>
    </reaction>
</comment>
<comment type="catalytic activity">
    <reaction evidence="1">
        <text>a ribonucleoside 5'-diphosphate + ATP = a ribonucleoside 5'-triphosphate + ADP</text>
        <dbReference type="Rhea" id="RHEA:18113"/>
        <dbReference type="ChEBI" id="CHEBI:30616"/>
        <dbReference type="ChEBI" id="CHEBI:57930"/>
        <dbReference type="ChEBI" id="CHEBI:61557"/>
        <dbReference type="ChEBI" id="CHEBI:456216"/>
        <dbReference type="EC" id="2.7.4.6"/>
    </reaction>
</comment>
<comment type="cofactor">
    <cofactor evidence="1">
        <name>Mg(2+)</name>
        <dbReference type="ChEBI" id="CHEBI:18420"/>
    </cofactor>
</comment>
<comment type="subunit">
    <text evidence="1">Homotetramer.</text>
</comment>
<comment type="subcellular location">
    <subcellularLocation>
        <location evidence="1">Cytoplasm</location>
    </subcellularLocation>
</comment>
<comment type="similarity">
    <text evidence="1">Belongs to the NDK family.</text>
</comment>
<accession>Q4UN87</accession>
<evidence type="ECO:0000255" key="1">
    <source>
        <dbReference type="HAMAP-Rule" id="MF_00451"/>
    </source>
</evidence>
<reference key="1">
    <citation type="journal article" date="2005" name="PLoS Biol.">
        <title>The genome sequence of Rickettsia felis identifies the first putative conjugative plasmid in an obligate intracellular parasite.</title>
        <authorList>
            <person name="Ogata H."/>
            <person name="Renesto P."/>
            <person name="Audic S."/>
            <person name="Robert C."/>
            <person name="Blanc G."/>
            <person name="Fournier P.-E."/>
            <person name="Parinello H."/>
            <person name="Claverie J.-M."/>
            <person name="Raoult D."/>
        </authorList>
    </citation>
    <scope>NUCLEOTIDE SEQUENCE [LARGE SCALE GENOMIC DNA]</scope>
    <source>
        <strain>ATCC VR-1525 / URRWXCal2</strain>
    </source>
</reference>
<keyword id="KW-0067">ATP-binding</keyword>
<keyword id="KW-0963">Cytoplasm</keyword>
<keyword id="KW-0418">Kinase</keyword>
<keyword id="KW-0460">Magnesium</keyword>
<keyword id="KW-0479">Metal-binding</keyword>
<keyword id="KW-0546">Nucleotide metabolism</keyword>
<keyword id="KW-0547">Nucleotide-binding</keyword>
<keyword id="KW-0597">Phosphoprotein</keyword>
<keyword id="KW-0808">Transferase</keyword>
<organism>
    <name type="scientific">Rickettsia felis (strain ATCC VR-1525 / URRWXCal2)</name>
    <name type="common">Rickettsia azadi</name>
    <dbReference type="NCBI Taxonomy" id="315456"/>
    <lineage>
        <taxon>Bacteria</taxon>
        <taxon>Pseudomonadati</taxon>
        <taxon>Pseudomonadota</taxon>
        <taxon>Alphaproteobacteria</taxon>
        <taxon>Rickettsiales</taxon>
        <taxon>Rickettsiaceae</taxon>
        <taxon>Rickettsieae</taxon>
        <taxon>Rickettsia</taxon>
        <taxon>spotted fever group</taxon>
    </lineage>
</organism>
<sequence>MTIQYTFSMIKPDAIKRNKIGQVNTYLENAGLKIVAQKMKFLTKYEAECFYDEHRARPFFNSLVEYITSGAVVLQVLKGEDAIILNRTIMGATNPAEAEAGTIRKDLGESIEANSIHGSDSENSAKREIEFFFNKSEIIE</sequence>
<feature type="chain" id="PRO_0000137034" description="Nucleoside diphosphate kinase">
    <location>
        <begin position="1"/>
        <end position="140"/>
    </location>
</feature>
<feature type="active site" description="Pros-phosphohistidine intermediate" evidence="1">
    <location>
        <position position="117"/>
    </location>
</feature>
<feature type="binding site" evidence="1">
    <location>
        <position position="11"/>
    </location>
    <ligand>
        <name>ATP</name>
        <dbReference type="ChEBI" id="CHEBI:30616"/>
    </ligand>
</feature>
<feature type="binding site" evidence="1">
    <location>
        <position position="59"/>
    </location>
    <ligand>
        <name>ATP</name>
        <dbReference type="ChEBI" id="CHEBI:30616"/>
    </ligand>
</feature>
<feature type="binding site" evidence="1">
    <location>
        <position position="87"/>
    </location>
    <ligand>
        <name>ATP</name>
        <dbReference type="ChEBI" id="CHEBI:30616"/>
    </ligand>
</feature>
<feature type="binding site" evidence="1">
    <location>
        <position position="93"/>
    </location>
    <ligand>
        <name>ATP</name>
        <dbReference type="ChEBI" id="CHEBI:30616"/>
    </ligand>
</feature>
<feature type="binding site" evidence="1">
    <location>
        <position position="104"/>
    </location>
    <ligand>
        <name>ATP</name>
        <dbReference type="ChEBI" id="CHEBI:30616"/>
    </ligand>
</feature>
<feature type="binding site" evidence="1">
    <location>
        <position position="114"/>
    </location>
    <ligand>
        <name>ATP</name>
        <dbReference type="ChEBI" id="CHEBI:30616"/>
    </ligand>
</feature>
<proteinExistence type="inferred from homology"/>